<reference key="1">
    <citation type="journal article" date="2007" name="PLoS Genet.">
        <title>The complete genome sequence of Yersinia pseudotuberculosis IP31758, the causative agent of Far East scarlet-like fever.</title>
        <authorList>
            <person name="Eppinger M."/>
            <person name="Rosovitz M.J."/>
            <person name="Fricke W.F."/>
            <person name="Rasko D.A."/>
            <person name="Kokorina G."/>
            <person name="Fayolle C."/>
            <person name="Lindler L.E."/>
            <person name="Carniel E."/>
            <person name="Ravel J."/>
        </authorList>
    </citation>
    <scope>NUCLEOTIDE SEQUENCE [LARGE SCALE GENOMIC DNA]</scope>
    <source>
        <strain>IP 31758</strain>
    </source>
</reference>
<proteinExistence type="inferred from homology"/>
<organism>
    <name type="scientific">Yersinia pseudotuberculosis serotype O:1b (strain IP 31758)</name>
    <dbReference type="NCBI Taxonomy" id="349747"/>
    <lineage>
        <taxon>Bacteria</taxon>
        <taxon>Pseudomonadati</taxon>
        <taxon>Pseudomonadota</taxon>
        <taxon>Gammaproteobacteria</taxon>
        <taxon>Enterobacterales</taxon>
        <taxon>Yersiniaceae</taxon>
        <taxon>Yersinia</taxon>
    </lineage>
</organism>
<keyword id="KW-0030">Aminoacyl-tRNA synthetase</keyword>
<keyword id="KW-0067">ATP-binding</keyword>
<keyword id="KW-0963">Cytoplasm</keyword>
<keyword id="KW-0436">Ligase</keyword>
<keyword id="KW-0547">Nucleotide-binding</keyword>
<keyword id="KW-0648">Protein biosynthesis</keyword>
<name>SYQ_YERP3</name>
<comment type="catalytic activity">
    <reaction evidence="1">
        <text>tRNA(Gln) + L-glutamine + ATP = L-glutaminyl-tRNA(Gln) + AMP + diphosphate</text>
        <dbReference type="Rhea" id="RHEA:20121"/>
        <dbReference type="Rhea" id="RHEA-COMP:9662"/>
        <dbReference type="Rhea" id="RHEA-COMP:9681"/>
        <dbReference type="ChEBI" id="CHEBI:30616"/>
        <dbReference type="ChEBI" id="CHEBI:33019"/>
        <dbReference type="ChEBI" id="CHEBI:58359"/>
        <dbReference type="ChEBI" id="CHEBI:78442"/>
        <dbReference type="ChEBI" id="CHEBI:78521"/>
        <dbReference type="ChEBI" id="CHEBI:456215"/>
        <dbReference type="EC" id="6.1.1.18"/>
    </reaction>
</comment>
<comment type="subunit">
    <text evidence="1">Monomer.</text>
</comment>
<comment type="subcellular location">
    <subcellularLocation>
        <location evidence="1">Cytoplasm</location>
    </subcellularLocation>
</comment>
<comment type="similarity">
    <text evidence="1">Belongs to the class-I aminoacyl-tRNA synthetase family.</text>
</comment>
<evidence type="ECO:0000255" key="1">
    <source>
        <dbReference type="HAMAP-Rule" id="MF_00126"/>
    </source>
</evidence>
<gene>
    <name evidence="1" type="primary">glnS</name>
    <name type="ordered locus">YpsIP31758_2907</name>
</gene>
<feature type="chain" id="PRO_1000057822" description="Glutamine--tRNA ligase">
    <location>
        <begin position="1"/>
        <end position="555"/>
    </location>
</feature>
<feature type="short sequence motif" description="'HIGH' region" evidence="1">
    <location>
        <begin position="34"/>
        <end position="44"/>
    </location>
</feature>
<feature type="short sequence motif" description="'KMSKS' region" evidence="1">
    <location>
        <begin position="268"/>
        <end position="272"/>
    </location>
</feature>
<feature type="binding site" evidence="1">
    <location>
        <begin position="35"/>
        <end position="37"/>
    </location>
    <ligand>
        <name>ATP</name>
        <dbReference type="ChEBI" id="CHEBI:30616"/>
    </ligand>
</feature>
<feature type="binding site" evidence="1">
    <location>
        <begin position="41"/>
        <end position="47"/>
    </location>
    <ligand>
        <name>ATP</name>
        <dbReference type="ChEBI" id="CHEBI:30616"/>
    </ligand>
</feature>
<feature type="binding site" evidence="1">
    <location>
        <position position="67"/>
    </location>
    <ligand>
        <name>L-glutamine</name>
        <dbReference type="ChEBI" id="CHEBI:58359"/>
    </ligand>
</feature>
<feature type="binding site" evidence="1">
    <location>
        <position position="212"/>
    </location>
    <ligand>
        <name>L-glutamine</name>
        <dbReference type="ChEBI" id="CHEBI:58359"/>
    </ligand>
</feature>
<feature type="binding site" evidence="1">
    <location>
        <position position="231"/>
    </location>
    <ligand>
        <name>ATP</name>
        <dbReference type="ChEBI" id="CHEBI:30616"/>
    </ligand>
</feature>
<feature type="binding site" evidence="1">
    <location>
        <begin position="261"/>
        <end position="262"/>
    </location>
    <ligand>
        <name>ATP</name>
        <dbReference type="ChEBI" id="CHEBI:30616"/>
    </ligand>
</feature>
<feature type="binding site" evidence="1">
    <location>
        <begin position="269"/>
        <end position="271"/>
    </location>
    <ligand>
        <name>ATP</name>
        <dbReference type="ChEBI" id="CHEBI:30616"/>
    </ligand>
</feature>
<sequence length="555" mass="63751">MSEAEARPSNFIRQIIDEDLASGKHTSVHTRFPPEPNGYLHIGHAKSICLNFGIAEDYQGQCNLRFDDTNPVKEDVEFVESIKRDVEWLGFTWSGDVRYSSDYFDQLYQYAVELINKGLAYVDELTPEQMREYRGTLTAPGKNSPYRDRSVEENLALFEKMRAGGFAEGTACLRAKIDMASPFIVMRDPVLYRIKFAEHHQSGNKWCIYPMYDFTHCISDALEGITHSLCTLEFQDNRRLYDWVLDNISIDCHPRQYEFSRLNLEYTIMSKRKLNQLVTEKVVEGWDDPRMPTISGLRRRGYTAASIREFCRRIGVTKQDNNVEMMSLESCIRDDLNEHAPRAMAVLDPIKVVIENRAAGEEWLTMPNHPNNPEMGSRQVPFDSEIYIDRADFREEANKQYKRLVLGKEVRLRNAYVIKAERVEKDAEGNVTTLYCSYDAETLNKDPADGRKVKGVIHWVSVAHALPAEIRLYDRLFNVPNPAAAEDFLSTINPESLVIRQGFVEPSLADAVSDKTYQFEREGYFCADSRYSRPGALVFNRTVGLRDTWAAKATQ</sequence>
<dbReference type="EC" id="6.1.1.18" evidence="1"/>
<dbReference type="EMBL" id="CP000720">
    <property type="protein sequence ID" value="ABS48611.1"/>
    <property type="molecule type" value="Genomic_DNA"/>
</dbReference>
<dbReference type="RefSeq" id="WP_002210354.1">
    <property type="nucleotide sequence ID" value="NC_009708.1"/>
</dbReference>
<dbReference type="SMR" id="A7FKU1"/>
<dbReference type="GeneID" id="57976061"/>
<dbReference type="KEGG" id="ypi:YpsIP31758_2907"/>
<dbReference type="HOGENOM" id="CLU_001882_2_3_6"/>
<dbReference type="Proteomes" id="UP000002412">
    <property type="component" value="Chromosome"/>
</dbReference>
<dbReference type="GO" id="GO:0005829">
    <property type="term" value="C:cytosol"/>
    <property type="evidence" value="ECO:0007669"/>
    <property type="project" value="TreeGrafter"/>
</dbReference>
<dbReference type="GO" id="GO:0005524">
    <property type="term" value="F:ATP binding"/>
    <property type="evidence" value="ECO:0007669"/>
    <property type="project" value="UniProtKB-UniRule"/>
</dbReference>
<dbReference type="GO" id="GO:0004819">
    <property type="term" value="F:glutamine-tRNA ligase activity"/>
    <property type="evidence" value="ECO:0007669"/>
    <property type="project" value="UniProtKB-UniRule"/>
</dbReference>
<dbReference type="GO" id="GO:0006425">
    <property type="term" value="P:glutaminyl-tRNA aminoacylation"/>
    <property type="evidence" value="ECO:0007669"/>
    <property type="project" value="InterPro"/>
</dbReference>
<dbReference type="GO" id="GO:0006424">
    <property type="term" value="P:glutamyl-tRNA aminoacylation"/>
    <property type="evidence" value="ECO:0007669"/>
    <property type="project" value="UniProtKB-UniRule"/>
</dbReference>
<dbReference type="CDD" id="cd00807">
    <property type="entry name" value="GlnRS_core"/>
    <property type="match status" value="1"/>
</dbReference>
<dbReference type="FunFam" id="1.10.1160.10:FF:000001">
    <property type="entry name" value="Glutamine--tRNA ligase"/>
    <property type="match status" value="1"/>
</dbReference>
<dbReference type="FunFam" id="2.40.240.10:FF:000001">
    <property type="entry name" value="Glutamine--tRNA ligase"/>
    <property type="match status" value="1"/>
</dbReference>
<dbReference type="FunFam" id="2.40.240.10:FF:000003">
    <property type="entry name" value="Glutamine--tRNA ligase"/>
    <property type="match status" value="1"/>
</dbReference>
<dbReference type="FunFam" id="3.90.800.10:FF:000001">
    <property type="entry name" value="Glutamine--tRNA ligase"/>
    <property type="match status" value="1"/>
</dbReference>
<dbReference type="FunFam" id="3.40.50.620:FF:000037">
    <property type="entry name" value="Glutamine--tRNA ligase cytoplasmic"/>
    <property type="match status" value="1"/>
</dbReference>
<dbReference type="Gene3D" id="1.10.1160.10">
    <property type="entry name" value="Glutamyl-trna Synthetase, Domain 2"/>
    <property type="match status" value="1"/>
</dbReference>
<dbReference type="Gene3D" id="3.90.800.10">
    <property type="entry name" value="Glutamyl-tRNA Synthetase, Domain 3"/>
    <property type="match status" value="1"/>
</dbReference>
<dbReference type="Gene3D" id="3.40.50.620">
    <property type="entry name" value="HUPs"/>
    <property type="match status" value="1"/>
</dbReference>
<dbReference type="Gene3D" id="2.40.240.10">
    <property type="entry name" value="Ribosomal Protein L25, Chain P"/>
    <property type="match status" value="2"/>
</dbReference>
<dbReference type="HAMAP" id="MF_00126">
    <property type="entry name" value="Gln_tRNA_synth"/>
    <property type="match status" value="1"/>
</dbReference>
<dbReference type="InterPro" id="IPR001412">
    <property type="entry name" value="aa-tRNA-synth_I_CS"/>
</dbReference>
<dbReference type="InterPro" id="IPR004514">
    <property type="entry name" value="Gln-tRNA-synth"/>
</dbReference>
<dbReference type="InterPro" id="IPR050132">
    <property type="entry name" value="Gln/Glu-tRNA_Ligase"/>
</dbReference>
<dbReference type="InterPro" id="IPR022861">
    <property type="entry name" value="Gln_tRNA_ligase_bac"/>
</dbReference>
<dbReference type="InterPro" id="IPR000924">
    <property type="entry name" value="Glu/Gln-tRNA-synth"/>
</dbReference>
<dbReference type="InterPro" id="IPR020058">
    <property type="entry name" value="Glu/Gln-tRNA-synth_Ib_cat-dom"/>
</dbReference>
<dbReference type="InterPro" id="IPR020059">
    <property type="entry name" value="Glu/Gln-tRNA-synth_Ib_codon-bd"/>
</dbReference>
<dbReference type="InterPro" id="IPR020061">
    <property type="entry name" value="Glu_tRNA_lig_a-bdl"/>
</dbReference>
<dbReference type="InterPro" id="IPR020056">
    <property type="entry name" value="Rbsml_bL25/Gln-tRNA_synth_N"/>
</dbReference>
<dbReference type="InterPro" id="IPR011035">
    <property type="entry name" value="Ribosomal_bL25/Gln-tRNA_synth"/>
</dbReference>
<dbReference type="InterPro" id="IPR014729">
    <property type="entry name" value="Rossmann-like_a/b/a_fold"/>
</dbReference>
<dbReference type="InterPro" id="IPR049437">
    <property type="entry name" value="tRNA-synt_1c_C2"/>
</dbReference>
<dbReference type="NCBIfam" id="TIGR00440">
    <property type="entry name" value="glnS"/>
    <property type="match status" value="1"/>
</dbReference>
<dbReference type="NCBIfam" id="NF011291">
    <property type="entry name" value="PRK14703.1"/>
    <property type="match status" value="1"/>
</dbReference>
<dbReference type="PANTHER" id="PTHR43097:SF5">
    <property type="entry name" value="GLUTAMATE--TRNA LIGASE"/>
    <property type="match status" value="1"/>
</dbReference>
<dbReference type="PANTHER" id="PTHR43097">
    <property type="entry name" value="GLUTAMINE-TRNA LIGASE"/>
    <property type="match status" value="1"/>
</dbReference>
<dbReference type="Pfam" id="PF00749">
    <property type="entry name" value="tRNA-synt_1c"/>
    <property type="match status" value="1"/>
</dbReference>
<dbReference type="Pfam" id="PF03950">
    <property type="entry name" value="tRNA-synt_1c_C"/>
    <property type="match status" value="1"/>
</dbReference>
<dbReference type="Pfam" id="PF20974">
    <property type="entry name" value="tRNA-synt_1c_C2"/>
    <property type="match status" value="1"/>
</dbReference>
<dbReference type="PRINTS" id="PR00987">
    <property type="entry name" value="TRNASYNTHGLU"/>
</dbReference>
<dbReference type="SUPFAM" id="SSF52374">
    <property type="entry name" value="Nucleotidylyl transferase"/>
    <property type="match status" value="1"/>
</dbReference>
<dbReference type="SUPFAM" id="SSF50715">
    <property type="entry name" value="Ribosomal protein L25-like"/>
    <property type="match status" value="1"/>
</dbReference>
<dbReference type="PROSITE" id="PS00178">
    <property type="entry name" value="AA_TRNA_LIGASE_I"/>
    <property type="match status" value="1"/>
</dbReference>
<protein>
    <recommendedName>
        <fullName evidence="1">Glutamine--tRNA ligase</fullName>
        <ecNumber evidence="1">6.1.1.18</ecNumber>
    </recommendedName>
    <alternativeName>
        <fullName evidence="1">Glutaminyl-tRNA synthetase</fullName>
        <shortName evidence="1">GlnRS</shortName>
    </alternativeName>
</protein>
<accession>A7FKU1</accession>